<name>DBPA_ECOLI</name>
<feature type="chain" id="PRO_0000055096" description="ATP-dependent RNA helicase DbpA">
    <location>
        <begin position="1"/>
        <end position="457"/>
    </location>
</feature>
<feature type="domain" description="Helicase ATP-binding" evidence="1">
    <location>
        <begin position="34"/>
        <end position="205"/>
    </location>
</feature>
<feature type="domain" description="Helicase C-terminal" evidence="1">
    <location>
        <begin position="230"/>
        <end position="376"/>
    </location>
</feature>
<feature type="region of interest" description="Involved in 23S rRNA binding" evidence="1">
    <location>
        <begin position="383"/>
        <end position="457"/>
    </location>
</feature>
<feature type="short sequence motif" description="Q motif">
    <location>
        <begin position="3"/>
        <end position="31"/>
    </location>
</feature>
<feature type="short sequence motif" description="DEAD box">
    <location>
        <begin position="153"/>
        <end position="156"/>
    </location>
</feature>
<feature type="binding site" evidence="1">
    <location>
        <begin position="47"/>
        <end position="54"/>
    </location>
    <ligand>
        <name>ATP</name>
        <dbReference type="ChEBI" id="CHEBI:30616"/>
    </ligand>
</feature>
<feature type="mutagenesis site" description="Shows accumulation of partially-assembled 45S particles." evidence="7">
    <original>K</original>
    <variation>A</variation>
    <location>
        <position position="53"/>
    </location>
</feature>
<feature type="mutagenesis site" description="Shows accumulation of partially-assembled 45S particles." evidence="7">
    <original>E</original>
    <variation>A</variation>
    <location>
        <position position="154"/>
    </location>
</feature>
<feature type="mutagenesis site" description="Shows accumulation of partially-assembled 45S particles. Binds rRNA normally but is severely impaired in ATPase and helicase activities. Overexpression confers a dominant slow growth and cold-sensitive phenotype." evidence="7">
    <original>R</original>
    <variation>A</variation>
    <location>
        <position position="331"/>
    </location>
</feature>
<feature type="helix" evidence="14">
    <location>
        <begin position="3"/>
        <end position="7"/>
    </location>
</feature>
<feature type="helix" evidence="14">
    <location>
        <begin position="12"/>
        <end position="21"/>
    </location>
</feature>
<feature type="helix" evidence="14">
    <location>
        <begin position="28"/>
        <end position="38"/>
    </location>
</feature>
<feature type="strand" evidence="14">
    <location>
        <begin position="42"/>
        <end position="46"/>
    </location>
</feature>
<feature type="helix" evidence="14">
    <location>
        <begin position="53"/>
        <end position="62"/>
    </location>
</feature>
<feature type="turn" evidence="16">
    <location>
        <begin position="67"/>
        <end position="69"/>
    </location>
</feature>
<feature type="strand" evidence="14">
    <location>
        <begin position="74"/>
        <end position="77"/>
    </location>
</feature>
<feature type="helix" evidence="14">
    <location>
        <begin position="81"/>
        <end position="94"/>
    </location>
</feature>
<feature type="helix" evidence="14">
    <location>
        <begin position="95"/>
        <end position="97"/>
    </location>
</feature>
<feature type="strand" evidence="15">
    <location>
        <begin position="98"/>
        <end position="100"/>
    </location>
</feature>
<feature type="strand" evidence="14">
    <location>
        <begin position="103"/>
        <end position="106"/>
    </location>
</feature>
<feature type="strand" evidence="15">
    <location>
        <begin position="108"/>
        <end position="110"/>
    </location>
</feature>
<feature type="helix" evidence="14">
    <location>
        <begin position="112"/>
        <end position="118"/>
    </location>
</feature>
<feature type="strand" evidence="14">
    <location>
        <begin position="124"/>
        <end position="128"/>
    </location>
</feature>
<feature type="helix" evidence="14">
    <location>
        <begin position="130"/>
        <end position="138"/>
    </location>
</feature>
<feature type="strand" evidence="14">
    <location>
        <begin position="149"/>
        <end position="153"/>
    </location>
</feature>
<feature type="helix" evidence="14">
    <location>
        <begin position="155"/>
        <end position="158"/>
    </location>
</feature>
<feature type="turn" evidence="14">
    <location>
        <begin position="161"/>
        <end position="163"/>
    </location>
</feature>
<feature type="helix" evidence="14">
    <location>
        <begin position="164"/>
        <end position="171"/>
    </location>
</feature>
<feature type="strand" evidence="14">
    <location>
        <begin position="179"/>
        <end position="185"/>
    </location>
</feature>
<feature type="helix" evidence="14">
    <location>
        <begin position="189"/>
        <end position="194"/>
    </location>
</feature>
<feature type="helix" evidence="14">
    <location>
        <begin position="195"/>
        <end position="198"/>
    </location>
</feature>
<feature type="strand" evidence="14">
    <location>
        <begin position="200"/>
        <end position="206"/>
    </location>
</feature>
<feature type="turn" evidence="13">
    <location>
        <begin position="209"/>
        <end position="212"/>
    </location>
</feature>
<feature type="strand" evidence="14">
    <location>
        <begin position="215"/>
        <end position="222"/>
    </location>
</feature>
<feature type="turn" evidence="15">
    <location>
        <begin position="225"/>
        <end position="227"/>
    </location>
</feature>
<feature type="helix" evidence="14">
    <location>
        <begin position="228"/>
        <end position="239"/>
    </location>
</feature>
<feature type="strand" evidence="14">
    <location>
        <begin position="242"/>
        <end position="247"/>
    </location>
</feature>
<feature type="helix" evidence="14">
    <location>
        <begin position="251"/>
        <end position="263"/>
    </location>
</feature>
<feature type="strand" evidence="14">
    <location>
        <begin position="268"/>
        <end position="271"/>
    </location>
</feature>
<feature type="strand" evidence="13">
    <location>
        <begin position="273"/>
        <end position="275"/>
    </location>
</feature>
<feature type="helix" evidence="14">
    <location>
        <begin position="277"/>
        <end position="288"/>
    </location>
</feature>
<feature type="strand" evidence="14">
    <location>
        <begin position="293"/>
        <end position="297"/>
    </location>
</feature>
<feature type="helix" evidence="14">
    <location>
        <begin position="299"/>
        <end position="301"/>
    </location>
</feature>
<feature type="strand" evidence="14">
    <location>
        <begin position="302"/>
        <end position="304"/>
    </location>
</feature>
<feature type="strand" evidence="14">
    <location>
        <begin position="312"/>
        <end position="317"/>
    </location>
</feature>
<feature type="helix" evidence="14">
    <location>
        <begin position="322"/>
        <end position="329"/>
    </location>
</feature>
<feature type="strand" evidence="13">
    <location>
        <begin position="335"/>
        <end position="338"/>
    </location>
</feature>
<feature type="strand" evidence="14">
    <location>
        <begin position="339"/>
        <end position="345"/>
    </location>
</feature>
<feature type="helix" evidence="14">
    <location>
        <begin position="347"/>
        <end position="349"/>
    </location>
</feature>
<feature type="helix" evidence="14">
    <location>
        <begin position="350"/>
        <end position="360"/>
    </location>
</feature>
<feature type="strand" evidence="13">
    <location>
        <begin position="365"/>
        <end position="367"/>
    </location>
</feature>
<feature type="strand" evidence="14">
    <location>
        <begin position="381"/>
        <end position="388"/>
    </location>
</feature>
<feature type="turn" evidence="14">
    <location>
        <begin position="390"/>
        <end position="394"/>
    </location>
</feature>
<feature type="helix" evidence="14">
    <location>
        <begin position="397"/>
        <end position="405"/>
    </location>
</feature>
<feature type="turn" evidence="15">
    <location>
        <begin position="406"/>
        <end position="408"/>
    </location>
</feature>
<feature type="helix" evidence="14">
    <location>
        <begin position="412"/>
        <end position="414"/>
    </location>
</feature>
<feature type="strand" evidence="14">
    <location>
        <begin position="415"/>
        <end position="420"/>
    </location>
</feature>
<feature type="strand" evidence="14">
    <location>
        <begin position="422"/>
        <end position="430"/>
    </location>
</feature>
<feature type="helix" evidence="14">
    <location>
        <begin position="431"/>
        <end position="442"/>
    </location>
</feature>
<feature type="strand" evidence="14">
    <location>
        <begin position="443"/>
        <end position="446"/>
    </location>
</feature>
<feature type="strand" evidence="14">
    <location>
        <begin position="453"/>
        <end position="455"/>
    </location>
</feature>
<sequence length="457" mass="49188">MTAFSTLNVLPPAQLTNLNELGYLTMTPVQAAALPAILAGKDVRVQAKTGSGKTAAFGLGLLQQIDASLFQTQALVLCPTRELADQVAGELRRLARFLPNTKILTLCGGQPFGMQRDSLQHAPHIIVATPGRLLDHLQKGTVSLDALNTLVMDEADRMLDMGFSDAIDDVIRFAPASRQTLLFSATWPEAIAAISGRVQRDPLAIEIDSTDALPPIEQQFYETSSKGKIPLLQRLLSLHQPSSCVVFCNTKKDCQAVCDALNEVGQSALSLHGDLEQRDRDQTLVRFANGSARVLVATDVAARGLDIKSLELVVNFELAWDPEVHVHRIGRTARAGNSGLAISFCAPEEAQRANIISDMLQIKLNWQTPPANSSIATLEAEMATLCIDGGKKAKMRPGDVLGALTGDIGLDGADIGKIAVHPAHVYVAVRQAVAHKAWKQLQGGKIKGKTCRVRLLK</sequence>
<proteinExistence type="evidence at protein level"/>
<comment type="function">
    <text evidence="1 2 3 4 6 7 8 9 10 11">DEAD-box RNA helicase involved in the assembly of the 50S ribosomal subunit. Has an RNA-dependent ATPase activity, which is specific for 23S rRNA, and a 3' to 5' RNA helicase activity that uses the energy of ATP hydrolysis to destabilize and unwind short rRNA duplexes. Requires a single-stranded RNA loading site on the 3' side of the substrate helix.</text>
</comment>
<comment type="catalytic activity">
    <reaction evidence="1 3 4 6 8">
        <text>ATP + H2O = ADP + phosphate + H(+)</text>
        <dbReference type="Rhea" id="RHEA:13065"/>
        <dbReference type="ChEBI" id="CHEBI:15377"/>
        <dbReference type="ChEBI" id="CHEBI:15378"/>
        <dbReference type="ChEBI" id="CHEBI:30616"/>
        <dbReference type="ChEBI" id="CHEBI:43474"/>
        <dbReference type="ChEBI" id="CHEBI:456216"/>
        <dbReference type="EC" id="3.6.4.13"/>
    </reaction>
</comment>
<comment type="activity regulation">
    <text evidence="2 3 6">Requires hairpin 92 of 23S rRNA for optimal activity. ATPase activity is stimulated by interaction of the N-terminal domain with RNA.</text>
</comment>
<comment type="subunit">
    <text evidence="5">Monomer.</text>
</comment>
<comment type="subcellular location">
    <subcellularLocation>
        <location evidence="12">Cytoplasm</location>
    </subcellularLocation>
</comment>
<comment type="domain">
    <text evidence="1 2 3">Contains an N-terminal domain that binds non-specifically to RNA and a C-terminal domain that binds specifically and tightly to hairpin 92 of 23S rRNA.</text>
</comment>
<comment type="similarity">
    <text evidence="1">Belongs to the DEAD box helicase family. DbpA subfamily.</text>
</comment>
<comment type="sequence caution" evidence="12">
    <conflict type="erroneous initiation">
        <sequence resource="EMBL-CDS" id="CAA36872"/>
    </conflict>
    <text>Truncated N-terminus.</text>
</comment>
<gene>
    <name evidence="1" type="primary">dbpA</name>
    <name type="ordered locus">b1343</name>
    <name type="ordered locus">JW1337</name>
</gene>
<protein>
    <recommendedName>
        <fullName evidence="1">ATP-dependent RNA helicase DbpA</fullName>
        <ecNumber evidence="1">3.6.4.13</ecNumber>
    </recommendedName>
</protein>
<dbReference type="EC" id="3.6.4.13" evidence="1"/>
<dbReference type="EMBL" id="X52647">
    <property type="protein sequence ID" value="CAA36872.1"/>
    <property type="status" value="ALT_INIT"/>
    <property type="molecule type" value="Genomic_DNA"/>
</dbReference>
<dbReference type="EMBL" id="U00096">
    <property type="protein sequence ID" value="AAC74425.1"/>
    <property type="molecule type" value="Genomic_DNA"/>
</dbReference>
<dbReference type="EMBL" id="AP009048">
    <property type="protein sequence ID" value="BAA14946.1"/>
    <property type="molecule type" value="Genomic_DNA"/>
</dbReference>
<dbReference type="PIR" id="B64884">
    <property type="entry name" value="B64884"/>
</dbReference>
<dbReference type="RefSeq" id="NP_415859.1">
    <property type="nucleotide sequence ID" value="NC_000913.3"/>
</dbReference>
<dbReference type="RefSeq" id="WP_000123737.1">
    <property type="nucleotide sequence ID" value="NZ_SSZK01000012.1"/>
</dbReference>
<dbReference type="PDB" id="7BBB">
    <property type="method" value="NMR"/>
    <property type="chains" value="A=209-457"/>
</dbReference>
<dbReference type="PDB" id="7PLI">
    <property type="method" value="X-ray"/>
    <property type="resolution" value="2.50 A"/>
    <property type="chains" value="A/B/E/F/I/J=1-457"/>
</dbReference>
<dbReference type="PDB" id="7PMM">
    <property type="method" value="X-ray"/>
    <property type="resolution" value="3.00 A"/>
    <property type="chains" value="A/B=1-457"/>
</dbReference>
<dbReference type="PDB" id="7PMQ">
    <property type="method" value="X-ray"/>
    <property type="resolution" value="3.22 A"/>
    <property type="chains" value="A/B/C/D=1-457"/>
</dbReference>
<dbReference type="PDBsum" id="7BBB"/>
<dbReference type="PDBsum" id="7PLI"/>
<dbReference type="PDBsum" id="7PMM"/>
<dbReference type="PDBsum" id="7PMQ"/>
<dbReference type="BMRB" id="P21693"/>
<dbReference type="SMR" id="P21693"/>
<dbReference type="BioGRID" id="4262985">
    <property type="interactions" value="106"/>
</dbReference>
<dbReference type="FunCoup" id="P21693">
    <property type="interactions" value="35"/>
</dbReference>
<dbReference type="IntAct" id="P21693">
    <property type="interactions" value="6"/>
</dbReference>
<dbReference type="STRING" id="511145.b1343"/>
<dbReference type="jPOST" id="P21693"/>
<dbReference type="PaxDb" id="511145-b1343"/>
<dbReference type="EnsemblBacteria" id="AAC74425">
    <property type="protein sequence ID" value="AAC74425"/>
    <property type="gene ID" value="b1343"/>
</dbReference>
<dbReference type="GeneID" id="947153"/>
<dbReference type="KEGG" id="ecj:JW1337"/>
<dbReference type="KEGG" id="eco:b1343"/>
<dbReference type="KEGG" id="ecoc:C3026_07870"/>
<dbReference type="PATRIC" id="fig|1411691.4.peg.933"/>
<dbReference type="EchoBASE" id="EB0206"/>
<dbReference type="eggNOG" id="COG0513">
    <property type="taxonomic scope" value="Bacteria"/>
</dbReference>
<dbReference type="HOGENOM" id="CLU_003041_1_3_6"/>
<dbReference type="InParanoid" id="P21693"/>
<dbReference type="OMA" id="FGCQALV"/>
<dbReference type="OrthoDB" id="9805696at2"/>
<dbReference type="PhylomeDB" id="P21693"/>
<dbReference type="BioCyc" id="EcoCyc:EG10210-MONOMER"/>
<dbReference type="BioCyc" id="MetaCyc:EG10210-MONOMER"/>
<dbReference type="BRENDA" id="3.6.4.13">
    <property type="organism ID" value="2026"/>
</dbReference>
<dbReference type="PRO" id="PR:P21693"/>
<dbReference type="Proteomes" id="UP000000625">
    <property type="component" value="Chromosome"/>
</dbReference>
<dbReference type="GO" id="GO:0005829">
    <property type="term" value="C:cytosol"/>
    <property type="evidence" value="ECO:0000318"/>
    <property type="project" value="GO_Central"/>
</dbReference>
<dbReference type="GO" id="GO:0034458">
    <property type="term" value="F:3'-5' RNA helicase activity"/>
    <property type="evidence" value="ECO:0000314"/>
    <property type="project" value="EcoCyc"/>
</dbReference>
<dbReference type="GO" id="GO:0043531">
    <property type="term" value="F:ADP binding"/>
    <property type="evidence" value="ECO:0000314"/>
    <property type="project" value="EcoCyc"/>
</dbReference>
<dbReference type="GO" id="GO:0005524">
    <property type="term" value="F:ATP binding"/>
    <property type="evidence" value="ECO:0000314"/>
    <property type="project" value="EcoCyc"/>
</dbReference>
<dbReference type="GO" id="GO:0016887">
    <property type="term" value="F:ATP hydrolysis activity"/>
    <property type="evidence" value="ECO:0000314"/>
    <property type="project" value="EcoliWiki"/>
</dbReference>
<dbReference type="GO" id="GO:0033677">
    <property type="term" value="F:DNA/RNA helicase activity"/>
    <property type="evidence" value="ECO:0000314"/>
    <property type="project" value="EcoliWiki"/>
</dbReference>
<dbReference type="GO" id="GO:0003724">
    <property type="term" value="F:RNA helicase activity"/>
    <property type="evidence" value="ECO:0000314"/>
    <property type="project" value="EcoliWiki"/>
</dbReference>
<dbReference type="GO" id="GO:0019843">
    <property type="term" value="F:rRNA binding"/>
    <property type="evidence" value="ECO:0000314"/>
    <property type="project" value="EcoCyc"/>
</dbReference>
<dbReference type="GO" id="GO:0000027">
    <property type="term" value="P:ribosomal large subunit assembly"/>
    <property type="evidence" value="ECO:0000315"/>
    <property type="project" value="EcoCyc"/>
</dbReference>
<dbReference type="CDD" id="cd00268">
    <property type="entry name" value="DEADc"/>
    <property type="match status" value="1"/>
</dbReference>
<dbReference type="CDD" id="cd12501">
    <property type="entry name" value="RRM_EcDbpA_like"/>
    <property type="match status" value="1"/>
</dbReference>
<dbReference type="CDD" id="cd18787">
    <property type="entry name" value="SF2_C_DEAD"/>
    <property type="match status" value="1"/>
</dbReference>
<dbReference type="FunFam" id="3.30.70.330:FF:000254">
    <property type="entry name" value="ATP-dependent RNA helicase DbpA"/>
    <property type="match status" value="1"/>
</dbReference>
<dbReference type="FunFam" id="3.40.50.300:FF:001245">
    <property type="entry name" value="ATP-dependent RNA helicase DbpA"/>
    <property type="match status" value="1"/>
</dbReference>
<dbReference type="Gene3D" id="3.30.70.330">
    <property type="match status" value="1"/>
</dbReference>
<dbReference type="Gene3D" id="3.40.50.300">
    <property type="entry name" value="P-loop containing nucleotide triphosphate hydrolases"/>
    <property type="match status" value="2"/>
</dbReference>
<dbReference type="HAMAP" id="MF_00965">
    <property type="entry name" value="DEAD_helicase_DbpA"/>
    <property type="match status" value="1"/>
</dbReference>
<dbReference type="InterPro" id="IPR005580">
    <property type="entry name" value="DbpA/CsdA_RNA-bd_dom"/>
</dbReference>
<dbReference type="InterPro" id="IPR011545">
    <property type="entry name" value="DEAD/DEAH_box_helicase_dom"/>
</dbReference>
<dbReference type="InterPro" id="IPR050079">
    <property type="entry name" value="DEAD_box_RNA_helicase"/>
</dbReference>
<dbReference type="InterPro" id="IPR028619">
    <property type="entry name" value="DEAD_helicase_DbpA"/>
</dbReference>
<dbReference type="InterPro" id="IPR014001">
    <property type="entry name" value="Helicase_ATP-bd"/>
</dbReference>
<dbReference type="InterPro" id="IPR001650">
    <property type="entry name" value="Helicase_C-like"/>
</dbReference>
<dbReference type="InterPro" id="IPR012677">
    <property type="entry name" value="Nucleotide-bd_a/b_plait_sf"/>
</dbReference>
<dbReference type="InterPro" id="IPR027417">
    <property type="entry name" value="P-loop_NTPase"/>
</dbReference>
<dbReference type="InterPro" id="IPR000629">
    <property type="entry name" value="RNA-helicase_DEAD-box_CS"/>
</dbReference>
<dbReference type="NCBIfam" id="NF008744">
    <property type="entry name" value="PRK11776.1"/>
    <property type="match status" value="1"/>
</dbReference>
<dbReference type="PANTHER" id="PTHR47959:SF1">
    <property type="entry name" value="ATP-DEPENDENT RNA HELICASE DBPA"/>
    <property type="match status" value="1"/>
</dbReference>
<dbReference type="PANTHER" id="PTHR47959">
    <property type="entry name" value="ATP-DEPENDENT RNA HELICASE RHLE-RELATED"/>
    <property type="match status" value="1"/>
</dbReference>
<dbReference type="Pfam" id="PF03880">
    <property type="entry name" value="DbpA"/>
    <property type="match status" value="1"/>
</dbReference>
<dbReference type="Pfam" id="PF00270">
    <property type="entry name" value="DEAD"/>
    <property type="match status" value="1"/>
</dbReference>
<dbReference type="Pfam" id="PF00271">
    <property type="entry name" value="Helicase_C"/>
    <property type="match status" value="1"/>
</dbReference>
<dbReference type="SMART" id="SM00487">
    <property type="entry name" value="DEXDc"/>
    <property type="match status" value="1"/>
</dbReference>
<dbReference type="SMART" id="SM00490">
    <property type="entry name" value="HELICc"/>
    <property type="match status" value="1"/>
</dbReference>
<dbReference type="SUPFAM" id="SSF52540">
    <property type="entry name" value="P-loop containing nucleoside triphosphate hydrolases"/>
    <property type="match status" value="1"/>
</dbReference>
<dbReference type="PROSITE" id="PS00039">
    <property type="entry name" value="DEAD_ATP_HELICASE"/>
    <property type="match status" value="1"/>
</dbReference>
<dbReference type="PROSITE" id="PS51192">
    <property type="entry name" value="HELICASE_ATP_BIND_1"/>
    <property type="match status" value="1"/>
</dbReference>
<dbReference type="PROSITE" id="PS51194">
    <property type="entry name" value="HELICASE_CTER"/>
    <property type="match status" value="1"/>
</dbReference>
<dbReference type="PROSITE" id="PS51195">
    <property type="entry name" value="Q_MOTIF"/>
    <property type="match status" value="1"/>
</dbReference>
<accession>P21693</accession>
<evidence type="ECO:0000255" key="1">
    <source>
        <dbReference type="HAMAP-Rule" id="MF_00965"/>
    </source>
</evidence>
<evidence type="ECO:0000269" key="2">
    <source>
    </source>
</evidence>
<evidence type="ECO:0000269" key="3">
    <source>
    </source>
</evidence>
<evidence type="ECO:0000269" key="4">
    <source>
    </source>
</evidence>
<evidence type="ECO:0000269" key="5">
    <source>
    </source>
</evidence>
<evidence type="ECO:0000269" key="6">
    <source>
    </source>
</evidence>
<evidence type="ECO:0000269" key="7">
    <source>
    </source>
</evidence>
<evidence type="ECO:0000269" key="8">
    <source>
    </source>
</evidence>
<evidence type="ECO:0000269" key="9">
    <source>
    </source>
</evidence>
<evidence type="ECO:0000269" key="10">
    <source>
    </source>
</evidence>
<evidence type="ECO:0000269" key="11">
    <source>
    </source>
</evidence>
<evidence type="ECO:0000305" key="12"/>
<evidence type="ECO:0007829" key="13">
    <source>
        <dbReference type="PDB" id="7BBB"/>
    </source>
</evidence>
<evidence type="ECO:0007829" key="14">
    <source>
        <dbReference type="PDB" id="7PLI"/>
    </source>
</evidence>
<evidence type="ECO:0007829" key="15">
    <source>
        <dbReference type="PDB" id="7PMM"/>
    </source>
</evidence>
<evidence type="ECO:0007829" key="16">
    <source>
        <dbReference type="PDB" id="7PMQ"/>
    </source>
</evidence>
<reference key="1">
    <citation type="journal article" date="1990" name="Nucleic Acids Res.">
        <title>Identification of a putative RNA helicase in E.coli.</title>
        <authorList>
            <person name="Iggo R."/>
            <person name="Picksley S."/>
            <person name="Southgate J."/>
            <person name="McPheat J."/>
            <person name="Lane D.P."/>
        </authorList>
    </citation>
    <scope>NUCLEOTIDE SEQUENCE [GENOMIC DNA]</scope>
</reference>
<reference key="2">
    <citation type="journal article" date="1993" name="EMBO J.">
        <title>DbpA: a DEAD box protein specifically activated by 23s rRNA.</title>
        <authorList>
            <person name="Fuller-Pace F.V."/>
            <person name="Nicol S.M."/>
            <person name="Reid A.D."/>
            <person name="Lane D.P."/>
        </authorList>
    </citation>
    <scope>SEQUENCE REVISION TO N-TERMINUS</scope>
    <scope>FUNCTION</scope>
</reference>
<reference key="3">
    <citation type="journal article" date="1996" name="DNA Res.">
        <title>A 570-kb DNA sequence of the Escherichia coli K-12 genome corresponding to the 28.0-40.1 min region on the linkage map.</title>
        <authorList>
            <person name="Aiba H."/>
            <person name="Baba T."/>
            <person name="Fujita K."/>
            <person name="Hayashi K."/>
            <person name="Inada T."/>
            <person name="Isono K."/>
            <person name="Itoh T."/>
            <person name="Kasai H."/>
            <person name="Kashimoto K."/>
            <person name="Kimura S."/>
            <person name="Kitakawa M."/>
            <person name="Kitagawa M."/>
            <person name="Makino K."/>
            <person name="Miki T."/>
            <person name="Mizobuchi K."/>
            <person name="Mori H."/>
            <person name="Mori T."/>
            <person name="Motomura K."/>
            <person name="Nakade S."/>
            <person name="Nakamura Y."/>
            <person name="Nashimoto H."/>
            <person name="Nishio Y."/>
            <person name="Oshima T."/>
            <person name="Saito N."/>
            <person name="Sampei G."/>
            <person name="Seki Y."/>
            <person name="Sivasundaram S."/>
            <person name="Tagami H."/>
            <person name="Takeda J."/>
            <person name="Takemoto K."/>
            <person name="Takeuchi Y."/>
            <person name="Wada C."/>
            <person name="Yamamoto Y."/>
            <person name="Horiuchi T."/>
        </authorList>
    </citation>
    <scope>NUCLEOTIDE SEQUENCE [LARGE SCALE GENOMIC DNA]</scope>
    <source>
        <strain>K12 / W3110 / ATCC 27325 / DSM 5911</strain>
    </source>
</reference>
<reference key="4">
    <citation type="journal article" date="1997" name="Science">
        <title>The complete genome sequence of Escherichia coli K-12.</title>
        <authorList>
            <person name="Blattner F.R."/>
            <person name="Plunkett G. III"/>
            <person name="Bloch C.A."/>
            <person name="Perna N.T."/>
            <person name="Burland V."/>
            <person name="Riley M."/>
            <person name="Collado-Vides J."/>
            <person name="Glasner J.D."/>
            <person name="Rode C.K."/>
            <person name="Mayhew G.F."/>
            <person name="Gregor J."/>
            <person name="Davis N.W."/>
            <person name="Kirkpatrick H.A."/>
            <person name="Goeden M.A."/>
            <person name="Rose D.J."/>
            <person name="Mau B."/>
            <person name="Shao Y."/>
        </authorList>
    </citation>
    <scope>NUCLEOTIDE SEQUENCE [LARGE SCALE GENOMIC DNA]</scope>
    <source>
        <strain>K12 / MG1655 / ATCC 47076</strain>
    </source>
</reference>
<reference key="5">
    <citation type="journal article" date="2006" name="Mol. Syst. Biol.">
        <title>Highly accurate genome sequences of Escherichia coli K-12 strains MG1655 and W3110.</title>
        <authorList>
            <person name="Hayashi K."/>
            <person name="Morooka N."/>
            <person name="Yamamoto Y."/>
            <person name="Fujita K."/>
            <person name="Isono K."/>
            <person name="Choi S."/>
            <person name="Ohtsubo E."/>
            <person name="Baba T."/>
            <person name="Wanner B.L."/>
            <person name="Mori H."/>
            <person name="Horiuchi T."/>
        </authorList>
    </citation>
    <scope>NUCLEOTIDE SEQUENCE [LARGE SCALE GENOMIC DNA]</scope>
    <source>
        <strain>K12 / W3110 / ATCC 27325 / DSM 5911</strain>
    </source>
</reference>
<reference key="6">
    <citation type="journal article" date="1997" name="Nucleic Acids Res.">
        <title>Characterization of DbpA, an Escherichia coli DEAD box protein with ATP independent RNA unwinding activity.</title>
        <authorList>
            <person name="Boeddecker N."/>
            <person name="Stade K."/>
            <person name="Franceschi F."/>
        </authorList>
    </citation>
    <scope>FUNCTION</scope>
    <scope>RNA-BINDING</scope>
</reference>
<reference key="7">
    <citation type="journal article" date="1998" name="Biochemistry">
        <title>Kinetic analysis of the RNA-dependent adenosinetriphosphatase activity of DbpA, an Escherichia coli DEAD protein specific for 23S ribosomal RNA.</title>
        <authorList>
            <person name="Tsu C.A."/>
            <person name="Uhlenbeck O.C."/>
        </authorList>
    </citation>
    <scope>FUNCTION</scope>
</reference>
<reference key="8">
    <citation type="journal article" date="2001" name="EMBO J.">
        <title>Escherichia coli DbpA is an RNA helicase that requires hairpin 92 of 23S rRNA.</title>
        <authorList>
            <person name="Diges C.M."/>
            <person name="Uhlenbeck O.C."/>
        </authorList>
    </citation>
    <scope>FUNCTION</scope>
    <scope>CATALYTIC ACTIVITY</scope>
    <scope>ACTIVITY REGULATION</scope>
    <scope>DOMAIN</scope>
    <scope>RNA-BINDING</scope>
</reference>
<reference key="9">
    <citation type="journal article" date="2001" name="RNA">
        <title>The Escherichia coli DEAD protein DbpA recognizes a small RNA hairpin in 23S rRNA.</title>
        <authorList>
            <person name="Tsu C.A."/>
            <person name="Kossen K."/>
            <person name="Uhlenbeck O.C."/>
        </authorList>
    </citation>
    <scope>FUNCTION</scope>
    <scope>ACTIVITY REGULATION</scope>
    <scope>DOMAIN</scope>
    <scope>RNA-BINDING</scope>
</reference>
<reference key="10">
    <citation type="journal article" date="2005" name="Biochemistry">
        <title>Escherichia coli DbpA is a 3' --&gt; 5' RNA helicase.</title>
        <authorList>
            <person name="Diges C.M."/>
            <person name="Uhlenbeck O.C."/>
        </authorList>
    </citation>
    <scope>FUNCTION</scope>
    <scope>CATALYTIC ACTIVITY</scope>
</reference>
<reference key="11">
    <citation type="journal article" date="2006" name="J. Mol. Biol.">
        <title>Hydrodynamic characterization of the DEAD-box RNA helicase DbpA.</title>
        <authorList>
            <person name="Talavera M.A."/>
            <person name="Matthews E.E."/>
            <person name="Eliason W.K."/>
            <person name="Sagi I."/>
            <person name="Wang J."/>
            <person name="Henn A."/>
            <person name="De La Cruz E.M."/>
        </authorList>
    </citation>
    <scope>SUBUNIT</scope>
</reference>
<reference key="12">
    <citation type="journal article" date="2008" name="J. Mol. Biol.">
        <title>The ATPase cycle mechanism of the DEAD-box rRNA helicase, DbpA.</title>
        <authorList>
            <person name="Henn A."/>
            <person name="Cao W."/>
            <person name="Hackney D.D."/>
            <person name="De La Cruz E.M."/>
        </authorList>
    </citation>
    <scope>FUNCTION</scope>
    <scope>CATALYTIC ACTIVITY</scope>
    <scope>ACTIVITY REGULATION</scope>
</reference>
<reference key="13">
    <citation type="journal article" date="2009" name="Nucleic Acids Res.">
        <title>A dominant negative mutant of the E. coli RNA helicase DbpA blocks assembly of the 50S ribosomal subunit.</title>
        <authorList>
            <person name="Sharpe Elles L.M."/>
            <person name="Sykes M.T."/>
            <person name="Williamson J.R."/>
            <person name="Uhlenbeck O.C."/>
        </authorList>
    </citation>
    <scope>FUNCTION</scope>
    <scope>MUTAGENESIS OF LYS-53; GLU-154 AND ARG-331</scope>
</reference>
<reference key="14">
    <citation type="journal article" date="2010" name="Proc. Natl. Acad. Sci. U.S.A.">
        <title>Pathway of ATP utilization and duplex rRNA unwinding by the DEAD-box helicase, DbpA.</title>
        <authorList>
            <person name="Henn A."/>
            <person name="Cao W."/>
            <person name="Licciardello N."/>
            <person name="Heitkamp S.E."/>
            <person name="Hackney D.D."/>
            <person name="De La Cruz E.M."/>
        </authorList>
    </citation>
    <scope>FUNCTION</scope>
    <scope>CATALYTIC ACTIVITY</scope>
</reference>
<organism>
    <name type="scientific">Escherichia coli (strain K12)</name>
    <dbReference type="NCBI Taxonomy" id="83333"/>
    <lineage>
        <taxon>Bacteria</taxon>
        <taxon>Pseudomonadati</taxon>
        <taxon>Pseudomonadota</taxon>
        <taxon>Gammaproteobacteria</taxon>
        <taxon>Enterobacterales</taxon>
        <taxon>Enterobacteriaceae</taxon>
        <taxon>Escherichia</taxon>
    </lineage>
</organism>
<keyword id="KW-0002">3D-structure</keyword>
<keyword id="KW-0067">ATP-binding</keyword>
<keyword id="KW-0963">Cytoplasm</keyword>
<keyword id="KW-0347">Helicase</keyword>
<keyword id="KW-0378">Hydrolase</keyword>
<keyword id="KW-0547">Nucleotide-binding</keyword>
<keyword id="KW-1185">Reference proteome</keyword>
<keyword id="KW-0690">Ribosome biogenesis</keyword>
<keyword id="KW-0694">RNA-binding</keyword>